<accession>B3DQ65</accession>
<dbReference type="EMBL" id="CP000605">
    <property type="protein sequence ID" value="ACD97564.1"/>
    <property type="molecule type" value="Genomic_DNA"/>
</dbReference>
<dbReference type="RefSeq" id="WP_007055411.1">
    <property type="nucleotide sequence ID" value="NZ_AABM02000010.1"/>
</dbReference>
<dbReference type="SMR" id="B3DQ65"/>
<dbReference type="KEGG" id="blj:BLD_0118"/>
<dbReference type="HOGENOM" id="CLU_066632_1_1_11"/>
<dbReference type="Proteomes" id="UP000002419">
    <property type="component" value="Chromosome"/>
</dbReference>
<dbReference type="GO" id="GO:0043590">
    <property type="term" value="C:bacterial nucleoid"/>
    <property type="evidence" value="ECO:0007669"/>
    <property type="project" value="TreeGrafter"/>
</dbReference>
<dbReference type="GO" id="GO:0006310">
    <property type="term" value="P:DNA recombination"/>
    <property type="evidence" value="ECO:0007669"/>
    <property type="project" value="UniProtKB-UniRule"/>
</dbReference>
<dbReference type="GO" id="GO:0006302">
    <property type="term" value="P:double-strand break repair"/>
    <property type="evidence" value="ECO:0007669"/>
    <property type="project" value="TreeGrafter"/>
</dbReference>
<dbReference type="Gene3D" id="2.40.50.140">
    <property type="entry name" value="Nucleic acid-binding proteins"/>
    <property type="match status" value="1"/>
</dbReference>
<dbReference type="Gene3D" id="1.20.1440.120">
    <property type="entry name" value="Recombination protein O, C-terminal domain"/>
    <property type="match status" value="1"/>
</dbReference>
<dbReference type="HAMAP" id="MF_00201">
    <property type="entry name" value="RecO"/>
    <property type="match status" value="1"/>
</dbReference>
<dbReference type="InterPro" id="IPR037278">
    <property type="entry name" value="ARFGAP/RecO"/>
</dbReference>
<dbReference type="InterPro" id="IPR022572">
    <property type="entry name" value="DNA_rep/recomb_RecO_N"/>
</dbReference>
<dbReference type="InterPro" id="IPR012340">
    <property type="entry name" value="NA-bd_OB-fold"/>
</dbReference>
<dbReference type="InterPro" id="IPR003717">
    <property type="entry name" value="RecO"/>
</dbReference>
<dbReference type="InterPro" id="IPR042242">
    <property type="entry name" value="RecO_C"/>
</dbReference>
<dbReference type="NCBIfam" id="TIGR00613">
    <property type="entry name" value="reco"/>
    <property type="match status" value="1"/>
</dbReference>
<dbReference type="PANTHER" id="PTHR33991">
    <property type="entry name" value="DNA REPAIR PROTEIN RECO"/>
    <property type="match status" value="1"/>
</dbReference>
<dbReference type="PANTHER" id="PTHR33991:SF1">
    <property type="entry name" value="DNA REPAIR PROTEIN RECO"/>
    <property type="match status" value="1"/>
</dbReference>
<dbReference type="Pfam" id="PF02565">
    <property type="entry name" value="RecO_C"/>
    <property type="match status" value="1"/>
</dbReference>
<dbReference type="Pfam" id="PF11967">
    <property type="entry name" value="RecO_N"/>
    <property type="match status" value="1"/>
</dbReference>
<dbReference type="SUPFAM" id="SSF57863">
    <property type="entry name" value="ArfGap/RecO-like zinc finger"/>
    <property type="match status" value="1"/>
</dbReference>
<dbReference type="SUPFAM" id="SSF50249">
    <property type="entry name" value="Nucleic acid-binding proteins"/>
    <property type="match status" value="1"/>
</dbReference>
<keyword id="KW-0227">DNA damage</keyword>
<keyword id="KW-0233">DNA recombination</keyword>
<keyword id="KW-0234">DNA repair</keyword>
<reference key="1">
    <citation type="journal article" date="2008" name="BMC Genomics">
        <title>Comparative genomic analysis of the gut bacterium Bifidobacterium longum reveals loci susceptible to deletion during pure culture growth.</title>
        <authorList>
            <person name="Lee J.H."/>
            <person name="Karamychev V.N."/>
            <person name="Kozyavkin S.A."/>
            <person name="Mills D."/>
            <person name="Pavlov A.R."/>
            <person name="Pavlova N.V."/>
            <person name="Polouchine N.N."/>
            <person name="Richardson P.M."/>
            <person name="Shakhova V.V."/>
            <person name="Slesarev A.I."/>
            <person name="Weimer B."/>
            <person name="O'Sullivan D.J."/>
        </authorList>
    </citation>
    <scope>NUCLEOTIDE SEQUENCE [LARGE SCALE GENOMIC DNA]</scope>
    <source>
        <strain>DJO10A</strain>
    </source>
</reference>
<evidence type="ECO:0000255" key="1">
    <source>
        <dbReference type="HAMAP-Rule" id="MF_00201"/>
    </source>
</evidence>
<feature type="chain" id="PRO_1000099366" description="DNA repair protein RecO">
    <location>
        <begin position="1"/>
        <end position="239"/>
    </location>
</feature>
<protein>
    <recommendedName>
        <fullName evidence="1">DNA repair protein RecO</fullName>
    </recommendedName>
    <alternativeName>
        <fullName evidence="1">Recombination protein O</fullName>
    </alternativeName>
</protein>
<name>RECO_BIFLD</name>
<organism>
    <name type="scientific">Bifidobacterium longum (strain DJO10A)</name>
    <dbReference type="NCBI Taxonomy" id="205913"/>
    <lineage>
        <taxon>Bacteria</taxon>
        <taxon>Bacillati</taxon>
        <taxon>Actinomycetota</taxon>
        <taxon>Actinomycetes</taxon>
        <taxon>Bifidobacteriales</taxon>
        <taxon>Bifidobacteriaceae</taxon>
        <taxon>Bifidobacterium</taxon>
    </lineage>
</organism>
<comment type="function">
    <text evidence="1">Involved in DNA repair and RecF pathway recombination.</text>
</comment>
<comment type="similarity">
    <text evidence="1">Belongs to the RecO family.</text>
</comment>
<gene>
    <name evidence="1" type="primary">recO</name>
    <name type="ordered locus">BLD_0118</name>
</gene>
<sequence length="239" mass="26123">MSLYRDEGVVLRTSKLGEADRIITILTRGHGKIRAVAKGVRRTKSRFGARLEPFMRVDVLIAEGRSLDVVSQAEAVAAYGAPIAADYAAYEAANVIVETIDKIASTEHEQLPNQYRLLIGALNALAKQSHAPQAIGDSYVMRALALAGWTPRLGTCVVCGKAEPAYLSIASGGVMCEADHTTDARRIAPFVLNQFDALIRGDWSVLDAAPVERVVQELVEDWGEYYLERPIRSLRLIDS</sequence>
<proteinExistence type="inferred from homology"/>